<comment type="function">
    <text evidence="1">Histone H3-H4 chaperone that plays a role in maintenance of chromatin structure during RNA polymerase II transcription elongation thereby repressing transcription initiation from cryptic promoters. Mediates the reassembly of nucleosomes onto the promoters of at least a selected set of genes during repression; the nucleosome reassembly is essential for transcriptional repression. Essential for viability.</text>
</comment>
<comment type="subcellular location">
    <subcellularLocation>
        <location evidence="1">Nucleus</location>
    </subcellularLocation>
    <subcellularLocation>
        <location evidence="1">Chromosome</location>
    </subcellularLocation>
</comment>
<comment type="similarity">
    <text evidence="4">Belongs to the SPT6 family.</text>
</comment>
<gene>
    <name type="primary">SPT6</name>
    <name type="ordered locus">KLLA0B11385g</name>
</gene>
<dbReference type="EMBL" id="CR382122">
    <property type="protein sequence ID" value="CAH02429.1"/>
    <property type="molecule type" value="Genomic_DNA"/>
</dbReference>
<dbReference type="RefSeq" id="XP_452036.1">
    <property type="nucleotide sequence ID" value="XM_452036.1"/>
</dbReference>
<dbReference type="SMR" id="Q6CVK3"/>
<dbReference type="FunCoup" id="Q6CVK3">
    <property type="interactions" value="1311"/>
</dbReference>
<dbReference type="STRING" id="284590.Q6CVK3"/>
<dbReference type="PaxDb" id="284590-Q6CVK3"/>
<dbReference type="KEGG" id="kla:KLLA0_B11385g"/>
<dbReference type="eggNOG" id="KOG1856">
    <property type="taxonomic scope" value="Eukaryota"/>
</dbReference>
<dbReference type="HOGENOM" id="CLU_001680_0_1_1"/>
<dbReference type="InParanoid" id="Q6CVK3"/>
<dbReference type="OMA" id="GYFYLCF"/>
<dbReference type="Proteomes" id="UP000000598">
    <property type="component" value="Chromosome B"/>
</dbReference>
<dbReference type="GO" id="GO:0008023">
    <property type="term" value="C:transcription elongation factor complex"/>
    <property type="evidence" value="ECO:0007669"/>
    <property type="project" value="TreeGrafter"/>
</dbReference>
<dbReference type="GO" id="GO:0003677">
    <property type="term" value="F:DNA binding"/>
    <property type="evidence" value="ECO:0007669"/>
    <property type="project" value="InterPro"/>
</dbReference>
<dbReference type="GO" id="GO:0042393">
    <property type="term" value="F:histone binding"/>
    <property type="evidence" value="ECO:0007669"/>
    <property type="project" value="TreeGrafter"/>
</dbReference>
<dbReference type="GO" id="GO:0031491">
    <property type="term" value="F:nucleosome binding"/>
    <property type="evidence" value="ECO:0007669"/>
    <property type="project" value="TreeGrafter"/>
</dbReference>
<dbReference type="GO" id="GO:0034728">
    <property type="term" value="P:nucleosome organization"/>
    <property type="evidence" value="ECO:0007669"/>
    <property type="project" value="TreeGrafter"/>
</dbReference>
<dbReference type="GO" id="GO:0140673">
    <property type="term" value="P:transcription elongation-coupled chromatin remodeling"/>
    <property type="evidence" value="ECO:0007669"/>
    <property type="project" value="InterPro"/>
</dbReference>
<dbReference type="CDD" id="cd09928">
    <property type="entry name" value="SH2_Cterm_SPT6_like"/>
    <property type="match status" value="1"/>
</dbReference>
<dbReference type="CDD" id="cd09918">
    <property type="entry name" value="SH2_Nterm_SPT6_like"/>
    <property type="match status" value="1"/>
</dbReference>
<dbReference type="FunFam" id="3.30.505.10:FF:000065">
    <property type="entry name" value="Transcription elongation factor SPT6"/>
    <property type="match status" value="1"/>
</dbReference>
<dbReference type="FunFam" id="1.10.10.2740:FF:000002">
    <property type="entry name" value="Transcription elongation factor Spt6"/>
    <property type="match status" value="1"/>
</dbReference>
<dbReference type="FunFam" id="1.10.10.650:FF:000007">
    <property type="entry name" value="Transcription elongation factor Spt6"/>
    <property type="match status" value="1"/>
</dbReference>
<dbReference type="FunFam" id="3.30.505.10:FF:000056">
    <property type="entry name" value="Transcription elongation factor Spt6"/>
    <property type="match status" value="1"/>
</dbReference>
<dbReference type="Gene3D" id="1.10.10.650">
    <property type="entry name" value="RuvA domain 2-like"/>
    <property type="match status" value="1"/>
</dbReference>
<dbReference type="Gene3D" id="3.30.505.10">
    <property type="entry name" value="SH2 domain"/>
    <property type="match status" value="2"/>
</dbReference>
<dbReference type="Gene3D" id="1.10.10.2740">
    <property type="entry name" value="Spt6, Death-like domain"/>
    <property type="match status" value="1"/>
</dbReference>
<dbReference type="Gene3D" id="1.10.150.850">
    <property type="entry name" value="Spt6, helix-hairpin-helix domain"/>
    <property type="match status" value="1"/>
</dbReference>
<dbReference type="Gene3D" id="1.10.3500.10">
    <property type="entry name" value="Tex N-terminal region-like"/>
    <property type="match status" value="1"/>
</dbReference>
<dbReference type="Gene3D" id="3.30.420.140">
    <property type="entry name" value="YqgF/RNase H-like domain"/>
    <property type="match status" value="1"/>
</dbReference>
<dbReference type="InterPro" id="IPR012337">
    <property type="entry name" value="RNaseH-like_sf"/>
</dbReference>
<dbReference type="InterPro" id="IPR010994">
    <property type="entry name" value="RuvA_2-like"/>
</dbReference>
<dbReference type="InterPro" id="IPR000980">
    <property type="entry name" value="SH2"/>
</dbReference>
<dbReference type="InterPro" id="IPR036860">
    <property type="entry name" value="SH2_dom_sf"/>
</dbReference>
<dbReference type="InterPro" id="IPR049540">
    <property type="entry name" value="Spt6-like_S1"/>
</dbReference>
<dbReference type="InterPro" id="IPR028083">
    <property type="entry name" value="Spt6_acidic_N_dom"/>
</dbReference>
<dbReference type="InterPro" id="IPR042066">
    <property type="entry name" value="Spt6_death-like"/>
</dbReference>
<dbReference type="InterPro" id="IPR032706">
    <property type="entry name" value="Spt6_HHH"/>
</dbReference>
<dbReference type="InterPro" id="IPR028088">
    <property type="entry name" value="Spt6_HTH_DNA-bd_dom"/>
</dbReference>
<dbReference type="InterPro" id="IPR035420">
    <property type="entry name" value="Spt6_SH2"/>
</dbReference>
<dbReference type="InterPro" id="IPR035018">
    <property type="entry name" value="Spt6_SH2_C"/>
</dbReference>
<dbReference type="InterPro" id="IPR035019">
    <property type="entry name" value="Spt6_SH2_N"/>
</dbReference>
<dbReference type="InterPro" id="IPR028231">
    <property type="entry name" value="Spt6_YqgF"/>
</dbReference>
<dbReference type="InterPro" id="IPR055179">
    <property type="entry name" value="Tex-like_central_region"/>
</dbReference>
<dbReference type="InterPro" id="IPR023323">
    <property type="entry name" value="Tex-like_dom_sf"/>
</dbReference>
<dbReference type="InterPro" id="IPR023319">
    <property type="entry name" value="Tex-like_HTH_dom_sf"/>
</dbReference>
<dbReference type="InterPro" id="IPR017072">
    <property type="entry name" value="TF_Spt6"/>
</dbReference>
<dbReference type="InterPro" id="IPR006641">
    <property type="entry name" value="YqgF/RNaseH-like_dom"/>
</dbReference>
<dbReference type="InterPro" id="IPR037027">
    <property type="entry name" value="YqgF/RNaseH-like_dom_sf"/>
</dbReference>
<dbReference type="PANTHER" id="PTHR10145">
    <property type="entry name" value="TRANSCRIPTION ELONGATION FACTOR SPT6"/>
    <property type="match status" value="1"/>
</dbReference>
<dbReference type="PANTHER" id="PTHR10145:SF6">
    <property type="entry name" value="TRANSCRIPTION ELONGATION FACTOR SPT6"/>
    <property type="match status" value="1"/>
</dbReference>
<dbReference type="Pfam" id="PF14635">
    <property type="entry name" value="HHH_7"/>
    <property type="match status" value="1"/>
</dbReference>
<dbReference type="Pfam" id="PF14641">
    <property type="entry name" value="HTH_44"/>
    <property type="match status" value="1"/>
</dbReference>
<dbReference type="Pfam" id="PF14633">
    <property type="entry name" value="SH2_2"/>
    <property type="match status" value="1"/>
</dbReference>
<dbReference type="Pfam" id="PF14632">
    <property type="entry name" value="SPT6_acidic"/>
    <property type="match status" value="1"/>
</dbReference>
<dbReference type="Pfam" id="PF21710">
    <property type="entry name" value="Spt6_S1"/>
    <property type="match status" value="1"/>
</dbReference>
<dbReference type="Pfam" id="PF22706">
    <property type="entry name" value="Tex_central_region"/>
    <property type="match status" value="1"/>
</dbReference>
<dbReference type="Pfam" id="PF14639">
    <property type="entry name" value="YqgF"/>
    <property type="match status" value="1"/>
</dbReference>
<dbReference type="PIRSF" id="PIRSF036947">
    <property type="entry name" value="Spt6"/>
    <property type="match status" value="1"/>
</dbReference>
<dbReference type="SMART" id="SM00252">
    <property type="entry name" value="SH2"/>
    <property type="match status" value="1"/>
</dbReference>
<dbReference type="SMART" id="SM00732">
    <property type="entry name" value="YqgFc"/>
    <property type="match status" value="1"/>
</dbReference>
<dbReference type="SUPFAM" id="SSF53098">
    <property type="entry name" value="Ribonuclease H-like"/>
    <property type="match status" value="1"/>
</dbReference>
<dbReference type="SUPFAM" id="SSF47781">
    <property type="entry name" value="RuvA domain 2-like"/>
    <property type="match status" value="1"/>
</dbReference>
<dbReference type="SUPFAM" id="SSF55550">
    <property type="entry name" value="SH2 domain"/>
    <property type="match status" value="1"/>
</dbReference>
<dbReference type="SUPFAM" id="SSF158832">
    <property type="entry name" value="Tex N-terminal region-like"/>
    <property type="match status" value="1"/>
</dbReference>
<dbReference type="PROSITE" id="PS50001">
    <property type="entry name" value="SH2"/>
    <property type="match status" value="1"/>
</dbReference>
<name>SPT6_KLULA</name>
<organism>
    <name type="scientific">Kluyveromyces lactis (strain ATCC 8585 / CBS 2359 / DSM 70799 / NBRC 1267 / NRRL Y-1140 / WM37)</name>
    <name type="common">Yeast</name>
    <name type="synonym">Candida sphaerica</name>
    <dbReference type="NCBI Taxonomy" id="284590"/>
    <lineage>
        <taxon>Eukaryota</taxon>
        <taxon>Fungi</taxon>
        <taxon>Dikarya</taxon>
        <taxon>Ascomycota</taxon>
        <taxon>Saccharomycotina</taxon>
        <taxon>Saccharomycetes</taxon>
        <taxon>Saccharomycetales</taxon>
        <taxon>Saccharomycetaceae</taxon>
        <taxon>Kluyveromyces</taxon>
    </lineage>
</organism>
<keyword id="KW-0158">Chromosome</keyword>
<keyword id="KW-0539">Nucleus</keyword>
<keyword id="KW-1185">Reference proteome</keyword>
<keyword id="KW-0727">SH2 domain</keyword>
<keyword id="KW-0804">Transcription</keyword>
<sequence length="1460" mass="169610">MSDKEDEKQSQPVLKDDKQDQTEEPAIDDNVNGDEGPSDEEEGDDVFDSSEEDEDLDNDEEEAQKVREGFIVDDDEEGGEEDEVVKKKSRRKRRAREEENEALDEDDLDLLMENAGFKRPSASEAAKQRSGKLKRLKRVGDDEEESASAEPESEVARTNKLDDFFSEEEEEEELEDDGTGRAPSRKGVEKTVTLADDMDDFIEEDEFSDEDEEARKFRIAEKKRIKEQRLAQPTQITGLSPDKVDEMFEVFGDGHDYDWALELENEEELDRLEESSENEQDENELGIDSKRKKKLTLQDIYDLQDLKKNLLTEEDMNIRKADIPERYQELRTGLKNYGKLSPEDLELEKNWISDKIAVDKNFDADYDTTEFKEAIGNAINFIQQENLEVSFIYAYRRNYISSRSKDGFVLIEDDLWDIVFYDTEFHSIIYKRDYVKTFYEKLDIHDPIVDEYFSNQSMTELNSLQDIYDYVEFKYAQEINDVLLSTQQDATSKKHLKNSSYEKFKASALYQAINDTGITAEQVGENISAEHQLHPVVDHPSLKPTDSVANILEGPEAKDLQIFSQNPKLALETIEKYYALELSKNPKVRQKIRDDFYKYYIVDVALTSKGRKEIQRGSPYEDIKYALGRTPAHFRSEPDVFLRMLEAESLHLMNIQIHVSSQDQYTNHLFQTSLETSNTSEIASEWNSFRRDAFDSALNKVFSDVSQEIKDELKKTCLRLVTKSVRHQFMFKLDQAPFIPNPKDPKIPRVLTITCGQGKFGSDAIIAVYLNRKTEFVRDYKIVENPFDRKEPELFENALDDIIQHCQPNVIGINGPNPSTQRLYKKIQEIVQKKQIVDNRGSHVPVIYVEDEVAVRYQSSERAAQEFPSKPTLVKYCIALGRYIHSPLLEYANLTNEELLSLSIHSHQSLLTRELFLQALETSFVDIVNLVGIEVNKATDNHYYAKALRYIAGFGRRKSADFLESLQRLNEPLLARQQLITHDILTKTIFMNSAAFLYISWNEKNQRYEDLEHDQLDGTRIHPEDYHLATKVAADALEFDPDAIAEKEEQGTMSEFIELLREDPDRRTKLESLNLEAYAEELEKNTGQRKLNNLNTIVLELLEGFEELRNDFHPLHGDEVFKSLTGESEKTFFKGCIIPVRVERFRHNDIYGVTNSGVECVINAQRHIGAQLKRPAEEVYEIGKTYPAKVIYIDYDNISCEVSLLEHDIRRQYVPIHYSKDPSIWNVEQEMKDQEIEKKLALEEARAKRTHRVINHPYYGNFTGPQAEDYLRSRERGDFVIRQSSRGDDHLAITWKLDKDLFQHVDILEKDKENPLALGKTLIVEDQKYHDLDQIIVEYLQNKVRLLNEITSNEKFKKGTKKEVIKFIEDYSKVNPNRSVYYFSFNYEHPGWFYLMFKINAQSQLYVWNVKLTHTGFFLVNYNYPTVIQLCNGFKTLLKSSSRNKTQDNNNNNSGGYYGY</sequence>
<protein>
    <recommendedName>
        <fullName>Transcription elongation factor SPT6</fullName>
    </recommendedName>
    <alternativeName>
        <fullName>Chromatin elongation factor SPT6</fullName>
    </alternativeName>
</protein>
<proteinExistence type="inferred from homology"/>
<accession>Q6CVK3</accession>
<reference key="1">
    <citation type="journal article" date="2004" name="Nature">
        <title>Genome evolution in yeasts.</title>
        <authorList>
            <person name="Dujon B."/>
            <person name="Sherman D."/>
            <person name="Fischer G."/>
            <person name="Durrens P."/>
            <person name="Casaregola S."/>
            <person name="Lafontaine I."/>
            <person name="de Montigny J."/>
            <person name="Marck C."/>
            <person name="Neuveglise C."/>
            <person name="Talla E."/>
            <person name="Goffard N."/>
            <person name="Frangeul L."/>
            <person name="Aigle M."/>
            <person name="Anthouard V."/>
            <person name="Babour A."/>
            <person name="Barbe V."/>
            <person name="Barnay S."/>
            <person name="Blanchin S."/>
            <person name="Beckerich J.-M."/>
            <person name="Beyne E."/>
            <person name="Bleykasten C."/>
            <person name="Boisrame A."/>
            <person name="Boyer J."/>
            <person name="Cattolico L."/>
            <person name="Confanioleri F."/>
            <person name="de Daruvar A."/>
            <person name="Despons L."/>
            <person name="Fabre E."/>
            <person name="Fairhead C."/>
            <person name="Ferry-Dumazet H."/>
            <person name="Groppi A."/>
            <person name="Hantraye F."/>
            <person name="Hennequin C."/>
            <person name="Jauniaux N."/>
            <person name="Joyet P."/>
            <person name="Kachouri R."/>
            <person name="Kerrest A."/>
            <person name="Koszul R."/>
            <person name="Lemaire M."/>
            <person name="Lesur I."/>
            <person name="Ma L."/>
            <person name="Muller H."/>
            <person name="Nicaud J.-M."/>
            <person name="Nikolski M."/>
            <person name="Oztas S."/>
            <person name="Ozier-Kalogeropoulos O."/>
            <person name="Pellenz S."/>
            <person name="Potier S."/>
            <person name="Richard G.-F."/>
            <person name="Straub M.-L."/>
            <person name="Suleau A."/>
            <person name="Swennen D."/>
            <person name="Tekaia F."/>
            <person name="Wesolowski-Louvel M."/>
            <person name="Westhof E."/>
            <person name="Wirth B."/>
            <person name="Zeniou-Meyer M."/>
            <person name="Zivanovic Y."/>
            <person name="Bolotin-Fukuhara M."/>
            <person name="Thierry A."/>
            <person name="Bouchier C."/>
            <person name="Caudron B."/>
            <person name="Scarpelli C."/>
            <person name="Gaillardin C."/>
            <person name="Weissenbach J."/>
            <person name="Wincker P."/>
            <person name="Souciet J.-L."/>
        </authorList>
    </citation>
    <scope>NUCLEOTIDE SEQUENCE [LARGE SCALE GENOMIC DNA]</scope>
    <source>
        <strain>ATCC 8585 / CBS 2359 / DSM 70799 / NBRC 1267 / NRRL Y-1140 / WM37</strain>
    </source>
</reference>
<feature type="chain" id="PRO_0000238577" description="Transcription elongation factor SPT6">
    <location>
        <begin position="1"/>
        <end position="1460"/>
    </location>
</feature>
<feature type="domain" description="SH2" evidence="2">
    <location>
        <begin position="1257"/>
        <end position="1354"/>
    </location>
</feature>
<feature type="region of interest" description="Disordered" evidence="3">
    <location>
        <begin position="1"/>
        <end position="214"/>
    </location>
</feature>
<feature type="region of interest" description="Disordered" evidence="3">
    <location>
        <begin position="268"/>
        <end position="287"/>
    </location>
</feature>
<feature type="compositionally biased region" description="Basic and acidic residues" evidence="3">
    <location>
        <begin position="1"/>
        <end position="21"/>
    </location>
</feature>
<feature type="compositionally biased region" description="Acidic residues" evidence="3">
    <location>
        <begin position="36"/>
        <end position="62"/>
    </location>
</feature>
<feature type="compositionally biased region" description="Acidic residues" evidence="3">
    <location>
        <begin position="71"/>
        <end position="83"/>
    </location>
</feature>
<feature type="compositionally biased region" description="Acidic residues" evidence="3">
    <location>
        <begin position="98"/>
        <end position="110"/>
    </location>
</feature>
<feature type="compositionally biased region" description="Acidic residues" evidence="3">
    <location>
        <begin position="141"/>
        <end position="153"/>
    </location>
</feature>
<feature type="compositionally biased region" description="Basic and acidic residues" evidence="3">
    <location>
        <begin position="154"/>
        <end position="163"/>
    </location>
</feature>
<feature type="compositionally biased region" description="Acidic residues" evidence="3">
    <location>
        <begin position="164"/>
        <end position="177"/>
    </location>
</feature>
<feature type="compositionally biased region" description="Acidic residues" evidence="3">
    <location>
        <begin position="196"/>
        <end position="212"/>
    </location>
</feature>
<feature type="compositionally biased region" description="Acidic residues" evidence="3">
    <location>
        <begin position="268"/>
        <end position="285"/>
    </location>
</feature>
<evidence type="ECO:0000250" key="1">
    <source>
        <dbReference type="UniProtKB" id="P23615"/>
    </source>
</evidence>
<evidence type="ECO:0000255" key="2">
    <source>
        <dbReference type="PROSITE-ProRule" id="PRU00191"/>
    </source>
</evidence>
<evidence type="ECO:0000256" key="3">
    <source>
        <dbReference type="SAM" id="MobiDB-lite"/>
    </source>
</evidence>
<evidence type="ECO:0000305" key="4"/>